<sequence length="95" mass="10566">MAPQTSNLWLLLVVMMVMSQGCCQHWSYGLSPGGKRDLDSLSDTLGDIIERFPHADSPCSVLGCAEEPPFPKMYRMKGFIGSGTDRDNGHRTYKK</sequence>
<comment type="function">
    <text evidence="1">Stimulates the secretion of gonadotropins.</text>
</comment>
<comment type="subcellular location">
    <subcellularLocation>
        <location>Secreted</location>
    </subcellularLocation>
</comment>
<comment type="similarity">
    <text evidence="3">Belongs to the GnRH family.</text>
</comment>
<gene>
    <name type="primary">gnrh1</name>
</gene>
<feature type="signal peptide" evidence="2">
    <location>
        <begin position="1"/>
        <end position="23"/>
    </location>
</feature>
<feature type="chain" id="PRO_0000012441" description="Progonadoliberin-1">
    <location>
        <begin position="24"/>
        <end position="95"/>
    </location>
</feature>
<feature type="peptide" id="PRO_0000012442" description="Gonadoliberin-1">
    <location>
        <begin position="24"/>
        <end position="33"/>
    </location>
</feature>
<feature type="peptide" id="PRO_0000012443" description="GnRH-associated peptide 1" evidence="2">
    <location>
        <begin position="37"/>
        <end position="95"/>
    </location>
</feature>
<feature type="modified residue" description="Pyrrolidone carboxylic acid" evidence="1">
    <location>
        <position position="24"/>
    </location>
</feature>
<feature type="modified residue" description="Glycine amide" evidence="1">
    <location>
        <position position="33"/>
    </location>
</feature>
<keyword id="KW-0027">Amidation</keyword>
<keyword id="KW-0165">Cleavage on pair of basic residues</keyword>
<keyword id="KW-0372">Hormone</keyword>
<keyword id="KW-0873">Pyrrolidone carboxylic acid</keyword>
<keyword id="KW-0964">Secreted</keyword>
<keyword id="KW-0732">Signal</keyword>
<name>GON1_PAGMA</name>
<protein>
    <recommendedName>
        <fullName>Progonadoliberin-1</fullName>
    </recommendedName>
    <alternativeName>
        <fullName>Progonadoliberin I</fullName>
    </alternativeName>
    <component>
        <recommendedName>
            <fullName>Gonadoliberin-1</fullName>
        </recommendedName>
        <alternativeName>
            <fullName>Gonadoliberin I</fullName>
        </alternativeName>
        <alternativeName>
            <fullName>Gonadotropin-releasing hormone I</fullName>
            <shortName>GnRH-I</shortName>
        </alternativeName>
        <alternativeName>
            <fullName>Luliberin I</fullName>
        </alternativeName>
        <alternativeName>
            <fullName>Luteinizing hormone-releasing hormone I</fullName>
            <shortName>LH-RH I</shortName>
        </alternativeName>
    </component>
    <component>
        <recommendedName>
            <fullName>GnRH-associated peptide 1</fullName>
        </recommendedName>
        <alternativeName>
            <fullName>GnRH-associated peptide I</fullName>
        </alternativeName>
    </component>
</protein>
<accession>P70074</accession>
<reference key="1">
    <citation type="submission" date="1996-09" db="EMBL/GenBank/DDBJ databases">
        <authorList>
            <person name="Okuzawa K."/>
            <person name="Granneman J."/>
            <person name="Bogerd J."/>
            <person name="Goos H."/>
            <person name="Zohar Y."/>
            <person name="Kagawa H."/>
        </authorList>
    </citation>
    <scope>NUCLEOTIDE SEQUENCE [MRNA]</scope>
    <source>
        <tissue>Brain</tissue>
    </source>
</reference>
<proteinExistence type="inferred from homology"/>
<dbReference type="EMBL" id="D86582">
    <property type="protein sequence ID" value="BAA13129.1"/>
    <property type="molecule type" value="mRNA"/>
</dbReference>
<dbReference type="GO" id="GO:0005615">
    <property type="term" value="C:extracellular space"/>
    <property type="evidence" value="ECO:0000250"/>
    <property type="project" value="UniProtKB"/>
</dbReference>
<dbReference type="GO" id="GO:0005183">
    <property type="term" value="F:gonadotropin hormone-releasing hormone activity"/>
    <property type="evidence" value="ECO:0007669"/>
    <property type="project" value="InterPro"/>
</dbReference>
<dbReference type="GO" id="GO:0031530">
    <property type="term" value="F:gonadotropin-releasing hormone receptor binding"/>
    <property type="evidence" value="ECO:0007669"/>
    <property type="project" value="TreeGrafter"/>
</dbReference>
<dbReference type="InterPro" id="IPR002012">
    <property type="entry name" value="GnRH"/>
</dbReference>
<dbReference type="InterPro" id="IPR019792">
    <property type="entry name" value="Gonadoliberin"/>
</dbReference>
<dbReference type="InterPro" id="IPR004079">
    <property type="entry name" value="Gonadoliberin_I_precursor"/>
</dbReference>
<dbReference type="PANTHER" id="PTHR10522">
    <property type="entry name" value="GONADOLIBERIN"/>
    <property type="match status" value="1"/>
</dbReference>
<dbReference type="PANTHER" id="PTHR10522:SF0">
    <property type="entry name" value="PROGONADOLIBERIN-1"/>
    <property type="match status" value="1"/>
</dbReference>
<dbReference type="PRINTS" id="PR01541">
    <property type="entry name" value="GONADOLIBRNI"/>
</dbReference>
<dbReference type="PROSITE" id="PS00473">
    <property type="entry name" value="GNRH"/>
    <property type="match status" value="1"/>
</dbReference>
<evidence type="ECO:0000250" key="1"/>
<evidence type="ECO:0000255" key="2"/>
<evidence type="ECO:0000305" key="3"/>
<organism>
    <name type="scientific">Pagrus major</name>
    <name type="common">Red sea bream</name>
    <name type="synonym">Chrysophrys major</name>
    <dbReference type="NCBI Taxonomy" id="143350"/>
    <lineage>
        <taxon>Eukaryota</taxon>
        <taxon>Metazoa</taxon>
        <taxon>Chordata</taxon>
        <taxon>Craniata</taxon>
        <taxon>Vertebrata</taxon>
        <taxon>Euteleostomi</taxon>
        <taxon>Actinopterygii</taxon>
        <taxon>Neopterygii</taxon>
        <taxon>Teleostei</taxon>
        <taxon>Neoteleostei</taxon>
        <taxon>Acanthomorphata</taxon>
        <taxon>Eupercaria</taxon>
        <taxon>Spariformes</taxon>
        <taxon>Sparidae</taxon>
        <taxon>Pagrus</taxon>
    </lineage>
</organism>